<gene>
    <name type="primary">dph5</name>
    <name type="ORF">DDB_G0276115</name>
</gene>
<sequence>MVLYIIGLGLGDEKDVTIKGFEAIKKSSKIYLEAYTSLLGGSTSIEALEKFYEKKIIIADREMVESGCEEMLKESTENDVSFLVVGDPFGATTHTDLVIRAKELSIPVKVIHNASIMNAIGCCGLQLYSYGQTISMVFFTETTKPDSWYDRVKINRVNGMHTLCLLDIKVKEQSIENMCRGRLIYEPPRFMTVNQCIEQLLEIEEIRKEKVYDQDTLCIGLSRVGQDDQQIISGTMKELLDVDFGAPLHSFIICGDMHFIEKEYFETFRVKKN</sequence>
<dbReference type="EC" id="2.1.1.314"/>
<dbReference type="EMBL" id="AAFI02000014">
    <property type="protein sequence ID" value="EAL69357.1"/>
    <property type="molecule type" value="Genomic_DNA"/>
</dbReference>
<dbReference type="RefSeq" id="XP_643259.1">
    <property type="nucleotide sequence ID" value="XM_638167.1"/>
</dbReference>
<dbReference type="SMR" id="Q75JG8"/>
<dbReference type="FunCoup" id="Q75JG8">
    <property type="interactions" value="394"/>
</dbReference>
<dbReference type="STRING" id="44689.Q75JG8"/>
<dbReference type="PaxDb" id="44689-DDB0238863"/>
<dbReference type="EnsemblProtists" id="EAL69357">
    <property type="protein sequence ID" value="EAL69357"/>
    <property type="gene ID" value="DDB_G0276115"/>
</dbReference>
<dbReference type="GeneID" id="8620302"/>
<dbReference type="KEGG" id="ddi:DDB_G0276115"/>
<dbReference type="dictyBase" id="DDB_G0276115">
    <property type="gene designation" value="dph5"/>
</dbReference>
<dbReference type="VEuPathDB" id="AmoebaDB:DDB_G0276115"/>
<dbReference type="eggNOG" id="KOG3123">
    <property type="taxonomic scope" value="Eukaryota"/>
</dbReference>
<dbReference type="HOGENOM" id="CLU_066040_1_0_1"/>
<dbReference type="InParanoid" id="Q75JG8"/>
<dbReference type="OMA" id="HNASIMS"/>
<dbReference type="PhylomeDB" id="Q75JG8"/>
<dbReference type="Reactome" id="R-DDI-5358493">
    <property type="pathway name" value="Synthesis of diphthamide-EEF2"/>
</dbReference>
<dbReference type="UniPathway" id="UPA00559"/>
<dbReference type="PRO" id="PR:Q75JG8"/>
<dbReference type="Proteomes" id="UP000002195">
    <property type="component" value="Chromosome 2"/>
</dbReference>
<dbReference type="GO" id="GO:0005886">
    <property type="term" value="C:plasma membrane"/>
    <property type="evidence" value="ECO:0000250"/>
    <property type="project" value="dictyBase"/>
</dbReference>
<dbReference type="GO" id="GO:0141133">
    <property type="term" value="F:diphthine methyl ester synthase activity"/>
    <property type="evidence" value="ECO:0007669"/>
    <property type="project" value="UniProtKB-EC"/>
</dbReference>
<dbReference type="GO" id="GO:0016740">
    <property type="term" value="F:transferase activity"/>
    <property type="evidence" value="ECO:0000250"/>
    <property type="project" value="dictyBase"/>
</dbReference>
<dbReference type="GO" id="GO:0032259">
    <property type="term" value="P:methylation"/>
    <property type="evidence" value="ECO:0007669"/>
    <property type="project" value="UniProtKB-KW"/>
</dbReference>
<dbReference type="GO" id="GO:0017183">
    <property type="term" value="P:protein histidyl modification to diphthamide"/>
    <property type="evidence" value="ECO:0000250"/>
    <property type="project" value="UniProtKB"/>
</dbReference>
<dbReference type="CDD" id="cd11647">
    <property type="entry name" value="DHP5_DphB"/>
    <property type="match status" value="1"/>
</dbReference>
<dbReference type="FunFam" id="3.30.950.10:FF:000004">
    <property type="entry name" value="Diphthine synthase putative"/>
    <property type="match status" value="1"/>
</dbReference>
<dbReference type="FunFam" id="3.40.1010.10:FF:000004">
    <property type="entry name" value="Putative diphthine synthase"/>
    <property type="match status" value="1"/>
</dbReference>
<dbReference type="Gene3D" id="3.40.1010.10">
    <property type="entry name" value="Cobalt-precorrin-4 Transmethylase, Domain 1"/>
    <property type="match status" value="1"/>
</dbReference>
<dbReference type="Gene3D" id="3.30.950.10">
    <property type="entry name" value="Methyltransferase, Cobalt-precorrin-4 Transmethylase, Domain 2"/>
    <property type="match status" value="1"/>
</dbReference>
<dbReference type="HAMAP" id="MF_01084">
    <property type="entry name" value="Diphthine_synth"/>
    <property type="match status" value="1"/>
</dbReference>
<dbReference type="InterPro" id="IPR000878">
    <property type="entry name" value="4pyrrol_Mease"/>
</dbReference>
<dbReference type="InterPro" id="IPR035996">
    <property type="entry name" value="4pyrrol_Methylase_sf"/>
</dbReference>
<dbReference type="InterPro" id="IPR014777">
    <property type="entry name" value="4pyrrole_Mease_sub1"/>
</dbReference>
<dbReference type="InterPro" id="IPR014776">
    <property type="entry name" value="4pyrrole_Mease_sub2"/>
</dbReference>
<dbReference type="InterPro" id="IPR004551">
    <property type="entry name" value="Dphthn_synthase"/>
</dbReference>
<dbReference type="NCBIfam" id="TIGR00522">
    <property type="entry name" value="dph5"/>
    <property type="match status" value="1"/>
</dbReference>
<dbReference type="PANTHER" id="PTHR10882:SF0">
    <property type="entry name" value="DIPHTHINE METHYL ESTER SYNTHASE"/>
    <property type="match status" value="1"/>
</dbReference>
<dbReference type="PANTHER" id="PTHR10882">
    <property type="entry name" value="DIPHTHINE SYNTHASE"/>
    <property type="match status" value="1"/>
</dbReference>
<dbReference type="Pfam" id="PF00590">
    <property type="entry name" value="TP_methylase"/>
    <property type="match status" value="1"/>
</dbReference>
<dbReference type="PIRSF" id="PIRSF036432">
    <property type="entry name" value="Diphthine_synth"/>
    <property type="match status" value="1"/>
</dbReference>
<dbReference type="SUPFAM" id="SSF53790">
    <property type="entry name" value="Tetrapyrrole methylase"/>
    <property type="match status" value="1"/>
</dbReference>
<reference key="1">
    <citation type="journal article" date="2002" name="Nature">
        <title>Sequence and analysis of chromosome 2 of Dictyostelium discoideum.</title>
        <authorList>
            <person name="Gloeckner G."/>
            <person name="Eichinger L."/>
            <person name="Szafranski K."/>
            <person name="Pachebat J.A."/>
            <person name="Bankier A.T."/>
            <person name="Dear P.H."/>
            <person name="Lehmann R."/>
            <person name="Baumgart C."/>
            <person name="Parra G."/>
            <person name="Abril J.F."/>
            <person name="Guigo R."/>
            <person name="Kumpf K."/>
            <person name="Tunggal B."/>
            <person name="Cox E.C."/>
            <person name="Quail M.A."/>
            <person name="Platzer M."/>
            <person name="Rosenthal A."/>
            <person name="Noegel A.A."/>
        </authorList>
    </citation>
    <scope>NUCLEOTIDE SEQUENCE [LARGE SCALE GENOMIC DNA]</scope>
    <source>
        <strain>AX4</strain>
    </source>
</reference>
<reference key="2">
    <citation type="journal article" date="2005" name="Nature">
        <title>The genome of the social amoeba Dictyostelium discoideum.</title>
        <authorList>
            <person name="Eichinger L."/>
            <person name="Pachebat J.A."/>
            <person name="Gloeckner G."/>
            <person name="Rajandream M.A."/>
            <person name="Sucgang R."/>
            <person name="Berriman M."/>
            <person name="Song J."/>
            <person name="Olsen R."/>
            <person name="Szafranski K."/>
            <person name="Xu Q."/>
            <person name="Tunggal B."/>
            <person name="Kummerfeld S."/>
            <person name="Madera M."/>
            <person name="Konfortov B.A."/>
            <person name="Rivero F."/>
            <person name="Bankier A.T."/>
            <person name="Lehmann R."/>
            <person name="Hamlin N."/>
            <person name="Davies R."/>
            <person name="Gaudet P."/>
            <person name="Fey P."/>
            <person name="Pilcher K."/>
            <person name="Chen G."/>
            <person name="Saunders D."/>
            <person name="Sodergren E.J."/>
            <person name="Davis P."/>
            <person name="Kerhornou A."/>
            <person name="Nie X."/>
            <person name="Hall N."/>
            <person name="Anjard C."/>
            <person name="Hemphill L."/>
            <person name="Bason N."/>
            <person name="Farbrother P."/>
            <person name="Desany B."/>
            <person name="Just E."/>
            <person name="Morio T."/>
            <person name="Rost R."/>
            <person name="Churcher C.M."/>
            <person name="Cooper J."/>
            <person name="Haydock S."/>
            <person name="van Driessche N."/>
            <person name="Cronin A."/>
            <person name="Goodhead I."/>
            <person name="Muzny D.M."/>
            <person name="Mourier T."/>
            <person name="Pain A."/>
            <person name="Lu M."/>
            <person name="Harper D."/>
            <person name="Lindsay R."/>
            <person name="Hauser H."/>
            <person name="James K.D."/>
            <person name="Quiles M."/>
            <person name="Madan Babu M."/>
            <person name="Saito T."/>
            <person name="Buchrieser C."/>
            <person name="Wardroper A."/>
            <person name="Felder M."/>
            <person name="Thangavelu M."/>
            <person name="Johnson D."/>
            <person name="Knights A."/>
            <person name="Loulseged H."/>
            <person name="Mungall K.L."/>
            <person name="Oliver K."/>
            <person name="Price C."/>
            <person name="Quail M.A."/>
            <person name="Urushihara H."/>
            <person name="Hernandez J."/>
            <person name="Rabbinowitsch E."/>
            <person name="Steffen D."/>
            <person name="Sanders M."/>
            <person name="Ma J."/>
            <person name="Kohara Y."/>
            <person name="Sharp S."/>
            <person name="Simmonds M.N."/>
            <person name="Spiegler S."/>
            <person name="Tivey A."/>
            <person name="Sugano S."/>
            <person name="White B."/>
            <person name="Walker D."/>
            <person name="Woodward J.R."/>
            <person name="Winckler T."/>
            <person name="Tanaka Y."/>
            <person name="Shaulsky G."/>
            <person name="Schleicher M."/>
            <person name="Weinstock G.M."/>
            <person name="Rosenthal A."/>
            <person name="Cox E.C."/>
            <person name="Chisholm R.L."/>
            <person name="Gibbs R.A."/>
            <person name="Loomis W.F."/>
            <person name="Platzer M."/>
            <person name="Kay R.R."/>
            <person name="Williams J.G."/>
            <person name="Dear P.H."/>
            <person name="Noegel A.A."/>
            <person name="Barrell B.G."/>
            <person name="Kuspa A."/>
        </authorList>
    </citation>
    <scope>NUCLEOTIDE SEQUENCE [LARGE SCALE GENOMIC DNA]</scope>
    <source>
        <strain>AX4</strain>
    </source>
</reference>
<proteinExistence type="inferred from homology"/>
<feature type="chain" id="PRO_0000327700" description="Diphthine methyl ester synthase">
    <location>
        <begin position="1"/>
        <end position="273"/>
    </location>
</feature>
<feature type="binding site" evidence="1">
    <location>
        <position position="10"/>
    </location>
    <ligand>
        <name>S-adenosyl-L-methionine</name>
        <dbReference type="ChEBI" id="CHEBI:59789"/>
    </ligand>
</feature>
<feature type="binding site" evidence="1">
    <location>
        <position position="87"/>
    </location>
    <ligand>
        <name>S-adenosyl-L-methionine</name>
        <dbReference type="ChEBI" id="CHEBI:59789"/>
    </ligand>
</feature>
<feature type="binding site" evidence="1">
    <location>
        <position position="90"/>
    </location>
    <ligand>
        <name>S-adenosyl-L-methionine</name>
        <dbReference type="ChEBI" id="CHEBI:59789"/>
    </ligand>
</feature>
<feature type="binding site" evidence="1">
    <location>
        <begin position="115"/>
        <end position="116"/>
    </location>
    <ligand>
        <name>S-adenosyl-L-methionine</name>
        <dbReference type="ChEBI" id="CHEBI:59789"/>
    </ligand>
</feature>
<feature type="binding site" evidence="1">
    <location>
        <position position="166"/>
    </location>
    <ligand>
        <name>S-adenosyl-L-methionine</name>
        <dbReference type="ChEBI" id="CHEBI:59789"/>
    </ligand>
</feature>
<feature type="binding site" evidence="1">
    <location>
        <position position="224"/>
    </location>
    <ligand>
        <name>S-adenosyl-L-methionine</name>
        <dbReference type="ChEBI" id="CHEBI:59789"/>
    </ligand>
</feature>
<feature type="binding site" evidence="1">
    <location>
        <position position="249"/>
    </location>
    <ligand>
        <name>S-adenosyl-L-methionine</name>
        <dbReference type="ChEBI" id="CHEBI:59789"/>
    </ligand>
</feature>
<evidence type="ECO:0000250" key="1"/>
<evidence type="ECO:0000250" key="2">
    <source>
        <dbReference type="UniProtKB" id="P32469"/>
    </source>
</evidence>
<evidence type="ECO:0000305" key="3"/>
<organism>
    <name type="scientific">Dictyostelium discoideum</name>
    <name type="common">Social amoeba</name>
    <dbReference type="NCBI Taxonomy" id="44689"/>
    <lineage>
        <taxon>Eukaryota</taxon>
        <taxon>Amoebozoa</taxon>
        <taxon>Evosea</taxon>
        <taxon>Eumycetozoa</taxon>
        <taxon>Dictyostelia</taxon>
        <taxon>Dictyosteliales</taxon>
        <taxon>Dictyosteliaceae</taxon>
        <taxon>Dictyostelium</taxon>
    </lineage>
</organism>
<name>DPH5_DICDI</name>
<comment type="function">
    <text evidence="2">S-adenosyl-L-methionine-dependent methyltransferase that catalyzes four methylations of the modified target histidine residue in translation elongation factor 2 (EF-2), to form an intermediate called diphthine methyl ester. The four successive methylation reactions represent the second step of diphthamide biosynthesis.</text>
</comment>
<comment type="catalytic activity">
    <reaction evidence="2">
        <text>2-[(3S)-amino-3-carboxypropyl]-L-histidyl-[translation elongation factor 2] + 4 S-adenosyl-L-methionine = diphthine methyl ester-[translation elongation factor 2] + 4 S-adenosyl-L-homocysteine + 3 H(+)</text>
        <dbReference type="Rhea" id="RHEA:42652"/>
        <dbReference type="Rhea" id="RHEA-COMP:9749"/>
        <dbReference type="Rhea" id="RHEA-COMP:10173"/>
        <dbReference type="ChEBI" id="CHEBI:15378"/>
        <dbReference type="ChEBI" id="CHEBI:57856"/>
        <dbReference type="ChEBI" id="CHEBI:59789"/>
        <dbReference type="ChEBI" id="CHEBI:73995"/>
        <dbReference type="ChEBI" id="CHEBI:79005"/>
        <dbReference type="EC" id="2.1.1.314"/>
    </reaction>
</comment>
<comment type="pathway">
    <text>Protein modification; peptidyl-diphthamide biosynthesis.</text>
</comment>
<comment type="similarity">
    <text evidence="3">Belongs to the diphthine synthase family.</text>
</comment>
<keyword id="KW-0489">Methyltransferase</keyword>
<keyword id="KW-1185">Reference proteome</keyword>
<keyword id="KW-0949">S-adenosyl-L-methionine</keyword>
<keyword id="KW-0808">Transferase</keyword>
<protein>
    <recommendedName>
        <fullName>Diphthine methyl ester synthase</fullName>
        <ecNumber>2.1.1.314</ecNumber>
    </recommendedName>
    <alternativeName>
        <fullName>Diphthamide biosynthesis methyltransferase</fullName>
    </alternativeName>
</protein>
<accession>Q75JG8</accession>
<accession>Q552F4</accession>